<accession>B4S6H2</accession>
<feature type="chain" id="PRO_1000130045" description="Chaperonin GroEL">
    <location>
        <begin position="1"/>
        <end position="549"/>
    </location>
</feature>
<feature type="binding site" evidence="1">
    <location>
        <begin position="30"/>
        <end position="33"/>
    </location>
    <ligand>
        <name>ATP</name>
        <dbReference type="ChEBI" id="CHEBI:30616"/>
    </ligand>
</feature>
<feature type="binding site" evidence="1">
    <location>
        <position position="51"/>
    </location>
    <ligand>
        <name>ATP</name>
        <dbReference type="ChEBI" id="CHEBI:30616"/>
    </ligand>
</feature>
<feature type="binding site" evidence="1">
    <location>
        <begin position="87"/>
        <end position="91"/>
    </location>
    <ligand>
        <name>ATP</name>
        <dbReference type="ChEBI" id="CHEBI:30616"/>
    </ligand>
</feature>
<feature type="binding site" evidence="1">
    <location>
        <position position="415"/>
    </location>
    <ligand>
        <name>ATP</name>
        <dbReference type="ChEBI" id="CHEBI:30616"/>
    </ligand>
</feature>
<feature type="binding site" evidence="1">
    <location>
        <position position="496"/>
    </location>
    <ligand>
        <name>ATP</name>
        <dbReference type="ChEBI" id="CHEBI:30616"/>
    </ligand>
</feature>
<proteinExistence type="inferred from homology"/>
<dbReference type="EC" id="5.6.1.7" evidence="1"/>
<dbReference type="EMBL" id="CP001108">
    <property type="protein sequence ID" value="ACF45727.1"/>
    <property type="molecule type" value="Genomic_DNA"/>
</dbReference>
<dbReference type="RefSeq" id="WP_012505264.1">
    <property type="nucleotide sequence ID" value="NC_011059.1"/>
</dbReference>
<dbReference type="SMR" id="B4S6H2"/>
<dbReference type="STRING" id="290512.Paes_0680"/>
<dbReference type="KEGG" id="paa:Paes_0680"/>
<dbReference type="eggNOG" id="COG0459">
    <property type="taxonomic scope" value="Bacteria"/>
</dbReference>
<dbReference type="HOGENOM" id="CLU_016503_3_0_10"/>
<dbReference type="Proteomes" id="UP000002725">
    <property type="component" value="Chromosome"/>
</dbReference>
<dbReference type="GO" id="GO:0005737">
    <property type="term" value="C:cytoplasm"/>
    <property type="evidence" value="ECO:0007669"/>
    <property type="project" value="UniProtKB-SubCell"/>
</dbReference>
<dbReference type="GO" id="GO:0005524">
    <property type="term" value="F:ATP binding"/>
    <property type="evidence" value="ECO:0007669"/>
    <property type="project" value="UniProtKB-UniRule"/>
</dbReference>
<dbReference type="GO" id="GO:0140662">
    <property type="term" value="F:ATP-dependent protein folding chaperone"/>
    <property type="evidence" value="ECO:0007669"/>
    <property type="project" value="InterPro"/>
</dbReference>
<dbReference type="GO" id="GO:0016853">
    <property type="term" value="F:isomerase activity"/>
    <property type="evidence" value="ECO:0007669"/>
    <property type="project" value="UniProtKB-KW"/>
</dbReference>
<dbReference type="GO" id="GO:0051082">
    <property type="term" value="F:unfolded protein binding"/>
    <property type="evidence" value="ECO:0007669"/>
    <property type="project" value="UniProtKB-UniRule"/>
</dbReference>
<dbReference type="GO" id="GO:0042026">
    <property type="term" value="P:protein refolding"/>
    <property type="evidence" value="ECO:0007669"/>
    <property type="project" value="UniProtKB-UniRule"/>
</dbReference>
<dbReference type="CDD" id="cd03344">
    <property type="entry name" value="GroEL"/>
    <property type="match status" value="1"/>
</dbReference>
<dbReference type="FunFam" id="3.50.7.10:FF:000001">
    <property type="entry name" value="60 kDa chaperonin"/>
    <property type="match status" value="1"/>
</dbReference>
<dbReference type="Gene3D" id="3.50.7.10">
    <property type="entry name" value="GroEL"/>
    <property type="match status" value="1"/>
</dbReference>
<dbReference type="Gene3D" id="1.10.560.10">
    <property type="entry name" value="GroEL-like equatorial domain"/>
    <property type="match status" value="1"/>
</dbReference>
<dbReference type="Gene3D" id="3.30.260.10">
    <property type="entry name" value="TCP-1-like chaperonin intermediate domain"/>
    <property type="match status" value="1"/>
</dbReference>
<dbReference type="HAMAP" id="MF_00600">
    <property type="entry name" value="CH60"/>
    <property type="match status" value="1"/>
</dbReference>
<dbReference type="InterPro" id="IPR018370">
    <property type="entry name" value="Chaperonin_Cpn60_CS"/>
</dbReference>
<dbReference type="InterPro" id="IPR001844">
    <property type="entry name" value="Cpn60/GroEL"/>
</dbReference>
<dbReference type="InterPro" id="IPR002423">
    <property type="entry name" value="Cpn60/GroEL/TCP-1"/>
</dbReference>
<dbReference type="InterPro" id="IPR027409">
    <property type="entry name" value="GroEL-like_apical_dom_sf"/>
</dbReference>
<dbReference type="InterPro" id="IPR027413">
    <property type="entry name" value="GROEL-like_equatorial_sf"/>
</dbReference>
<dbReference type="InterPro" id="IPR027410">
    <property type="entry name" value="TCP-1-like_intermed_sf"/>
</dbReference>
<dbReference type="NCBIfam" id="TIGR02348">
    <property type="entry name" value="GroEL"/>
    <property type="match status" value="1"/>
</dbReference>
<dbReference type="NCBIfam" id="NF000592">
    <property type="entry name" value="PRK00013.1"/>
    <property type="match status" value="1"/>
</dbReference>
<dbReference type="NCBIfam" id="NF009487">
    <property type="entry name" value="PRK12849.1"/>
    <property type="match status" value="1"/>
</dbReference>
<dbReference type="NCBIfam" id="NF009488">
    <property type="entry name" value="PRK12850.1"/>
    <property type="match status" value="1"/>
</dbReference>
<dbReference type="NCBIfam" id="NF009489">
    <property type="entry name" value="PRK12851.1"/>
    <property type="match status" value="1"/>
</dbReference>
<dbReference type="PANTHER" id="PTHR45633">
    <property type="entry name" value="60 KDA HEAT SHOCK PROTEIN, MITOCHONDRIAL"/>
    <property type="match status" value="1"/>
</dbReference>
<dbReference type="Pfam" id="PF00118">
    <property type="entry name" value="Cpn60_TCP1"/>
    <property type="match status" value="1"/>
</dbReference>
<dbReference type="PRINTS" id="PR00298">
    <property type="entry name" value="CHAPERONIN60"/>
</dbReference>
<dbReference type="SUPFAM" id="SSF52029">
    <property type="entry name" value="GroEL apical domain-like"/>
    <property type="match status" value="1"/>
</dbReference>
<dbReference type="SUPFAM" id="SSF48592">
    <property type="entry name" value="GroEL equatorial domain-like"/>
    <property type="match status" value="1"/>
</dbReference>
<dbReference type="SUPFAM" id="SSF54849">
    <property type="entry name" value="GroEL-intermediate domain like"/>
    <property type="match status" value="1"/>
</dbReference>
<dbReference type="PROSITE" id="PS00296">
    <property type="entry name" value="CHAPERONINS_CPN60"/>
    <property type="match status" value="1"/>
</dbReference>
<gene>
    <name evidence="1" type="primary">groEL</name>
    <name evidence="1" type="synonym">groL</name>
    <name type="ordered locus">Paes_0680</name>
</gene>
<organism>
    <name type="scientific">Prosthecochloris aestuarii (strain DSM 271 / SK 413)</name>
    <dbReference type="NCBI Taxonomy" id="290512"/>
    <lineage>
        <taxon>Bacteria</taxon>
        <taxon>Pseudomonadati</taxon>
        <taxon>Chlorobiota</taxon>
        <taxon>Chlorobiia</taxon>
        <taxon>Chlorobiales</taxon>
        <taxon>Chlorobiaceae</taxon>
        <taxon>Prosthecochloris</taxon>
    </lineage>
</organism>
<evidence type="ECO:0000255" key="1">
    <source>
        <dbReference type="HAMAP-Rule" id="MF_00600"/>
    </source>
</evidence>
<protein>
    <recommendedName>
        <fullName evidence="1">Chaperonin GroEL</fullName>
        <ecNumber evidence="1">5.6.1.7</ecNumber>
    </recommendedName>
    <alternativeName>
        <fullName evidence="1">60 kDa chaperonin</fullName>
    </alternativeName>
    <alternativeName>
        <fullName evidence="1">Chaperonin-60</fullName>
        <shortName evidence="1">Cpn60</shortName>
    </alternativeName>
</protein>
<comment type="function">
    <text evidence="1">Together with its co-chaperonin GroES, plays an essential role in assisting protein folding. The GroEL-GroES system forms a nano-cage that allows encapsulation of the non-native substrate proteins and provides a physical environment optimized to promote and accelerate protein folding.</text>
</comment>
<comment type="catalytic activity">
    <reaction evidence="1">
        <text>ATP + H2O + a folded polypeptide = ADP + phosphate + an unfolded polypeptide.</text>
        <dbReference type="EC" id="5.6.1.7"/>
    </reaction>
</comment>
<comment type="subunit">
    <text evidence="1">Forms a cylinder of 14 subunits composed of two heptameric rings stacked back-to-back. Interacts with the co-chaperonin GroES.</text>
</comment>
<comment type="subcellular location">
    <subcellularLocation>
        <location evidence="1">Cytoplasm</location>
    </subcellularLocation>
</comment>
<comment type="similarity">
    <text evidence="1">Belongs to the chaperonin (HSP60) family.</text>
</comment>
<keyword id="KW-0067">ATP-binding</keyword>
<keyword id="KW-0143">Chaperone</keyword>
<keyword id="KW-0963">Cytoplasm</keyword>
<keyword id="KW-0413">Isomerase</keyword>
<keyword id="KW-0547">Nucleotide-binding</keyword>
<reference key="1">
    <citation type="submission" date="2008-06" db="EMBL/GenBank/DDBJ databases">
        <title>Complete sequence of chromosome of Prosthecochloris aestuarii DSM 271.</title>
        <authorList>
            <consortium name="US DOE Joint Genome Institute"/>
            <person name="Lucas S."/>
            <person name="Copeland A."/>
            <person name="Lapidus A."/>
            <person name="Glavina del Rio T."/>
            <person name="Dalin E."/>
            <person name="Tice H."/>
            <person name="Bruce D."/>
            <person name="Goodwin L."/>
            <person name="Pitluck S."/>
            <person name="Schmutz J."/>
            <person name="Larimer F."/>
            <person name="Land M."/>
            <person name="Hauser L."/>
            <person name="Kyrpides N."/>
            <person name="Anderson I."/>
            <person name="Liu Z."/>
            <person name="Li T."/>
            <person name="Zhao F."/>
            <person name="Overmann J."/>
            <person name="Bryant D.A."/>
            <person name="Richardson P."/>
        </authorList>
    </citation>
    <scope>NUCLEOTIDE SEQUENCE [LARGE SCALE GENOMIC DNA]</scope>
    <source>
        <strain>DSM 271 / SK 413</strain>
    </source>
</reference>
<name>CH60_PROA2</name>
<sequence length="549" mass="58252">MTAKDILFDAEARAKLKVGVDKLANAVKVTLGPAGRNVLIDKKFGAPTSTKDGVTVAKEVELEDAFENMGAQMVREVSSKTSDVAGDGTTTATVLAQAIYREGLKNVAAGARPIDLKRGIDLAVKDVVAELREISRDITGKKEIAQVGTISANNDPEIGELIAEAMDKVGKDGVITVEEAKGMDTELTVVEGMQFDRGYLSPYFVTNSEKMDADLEDPYILIYDKKISNMKELLPVLEKTAQSGRPLMIIAEDIEGEALATLVVNKLRGTLKVCAVKAPGFGDRRKAMLEDIAILTGGTVISEEKGYKLENATISYLGQAASITVDKDNTTIVDGKGQADDIKARIGEIKGQIEKSTSDYDTEKLQERLAKLSGGVAVLNIGASTEVEMKEKKARVEDALHATRAAVQEGIVAGGGVALIRAAKALDATNPENEDQKTGVDIIRRALEEPLRQIVANTGTTDGAVVVEKVKNSEGDYGFNARTEEYMNLIEAGVVDPTKVTRTALENAASVAGILLTTEAAITDIKEDGSDMPPMPGGMGGMGGMGGMM</sequence>